<sequence length="238" mass="25415">MRPADRAAQQVRPLTLTRNYTKHAEGSVLVEFGDTKVLCTATVEEGVPRFLKGQGQGWITAEYGMLPRSTHSRNAREAAKGKQGGRTLEIQRLIARSLRAAVDLKKLGEFTITLDCDVLQADGGTRTASISGACVALADALNKLVASGKLKANPMKGLVAAVSVGIVKGEALCDLEYVEDSAAETDMNVVMMEDGRMIEVQGTAEGEPFSHEELLALLDLARGGIETIFQAQKAALES</sequence>
<dbReference type="EC" id="2.7.7.56" evidence="1"/>
<dbReference type="EMBL" id="BX936398">
    <property type="protein sequence ID" value="CAH19281.1"/>
    <property type="molecule type" value="Genomic_DNA"/>
</dbReference>
<dbReference type="RefSeq" id="WP_002208997.1">
    <property type="nucleotide sequence ID" value="NZ_CP009712.1"/>
</dbReference>
<dbReference type="SMR" id="Q66GE1"/>
<dbReference type="GeneID" id="57974546"/>
<dbReference type="KEGG" id="ypo:BZ17_2554"/>
<dbReference type="KEGG" id="yps:YPTB0041"/>
<dbReference type="PATRIC" id="fig|273123.14.peg.2679"/>
<dbReference type="Proteomes" id="UP000001011">
    <property type="component" value="Chromosome"/>
</dbReference>
<dbReference type="GO" id="GO:0000175">
    <property type="term" value="F:3'-5'-RNA exonuclease activity"/>
    <property type="evidence" value="ECO:0007669"/>
    <property type="project" value="UniProtKB-UniRule"/>
</dbReference>
<dbReference type="GO" id="GO:0000049">
    <property type="term" value="F:tRNA binding"/>
    <property type="evidence" value="ECO:0007669"/>
    <property type="project" value="UniProtKB-UniRule"/>
</dbReference>
<dbReference type="GO" id="GO:0009022">
    <property type="term" value="F:tRNA nucleotidyltransferase activity"/>
    <property type="evidence" value="ECO:0007669"/>
    <property type="project" value="UniProtKB-UniRule"/>
</dbReference>
<dbReference type="GO" id="GO:0016075">
    <property type="term" value="P:rRNA catabolic process"/>
    <property type="evidence" value="ECO:0007669"/>
    <property type="project" value="UniProtKB-UniRule"/>
</dbReference>
<dbReference type="GO" id="GO:0006364">
    <property type="term" value="P:rRNA processing"/>
    <property type="evidence" value="ECO:0007669"/>
    <property type="project" value="UniProtKB-KW"/>
</dbReference>
<dbReference type="GO" id="GO:0008033">
    <property type="term" value="P:tRNA processing"/>
    <property type="evidence" value="ECO:0007669"/>
    <property type="project" value="UniProtKB-UniRule"/>
</dbReference>
<dbReference type="CDD" id="cd11362">
    <property type="entry name" value="RNase_PH_bact"/>
    <property type="match status" value="1"/>
</dbReference>
<dbReference type="FunFam" id="3.30.230.70:FF:000003">
    <property type="entry name" value="Ribonuclease PH"/>
    <property type="match status" value="1"/>
</dbReference>
<dbReference type="Gene3D" id="3.30.230.70">
    <property type="entry name" value="GHMP Kinase, N-terminal domain"/>
    <property type="match status" value="1"/>
</dbReference>
<dbReference type="HAMAP" id="MF_00564">
    <property type="entry name" value="RNase_PH"/>
    <property type="match status" value="1"/>
</dbReference>
<dbReference type="InterPro" id="IPR001247">
    <property type="entry name" value="ExoRNase_PH_dom1"/>
</dbReference>
<dbReference type="InterPro" id="IPR015847">
    <property type="entry name" value="ExoRNase_PH_dom2"/>
</dbReference>
<dbReference type="InterPro" id="IPR036345">
    <property type="entry name" value="ExoRNase_PH_dom2_sf"/>
</dbReference>
<dbReference type="InterPro" id="IPR027408">
    <property type="entry name" value="PNPase/RNase_PH_dom_sf"/>
</dbReference>
<dbReference type="InterPro" id="IPR020568">
    <property type="entry name" value="Ribosomal_Su5_D2-typ_SF"/>
</dbReference>
<dbReference type="InterPro" id="IPR050080">
    <property type="entry name" value="RNase_PH"/>
</dbReference>
<dbReference type="InterPro" id="IPR002381">
    <property type="entry name" value="RNase_PH_bac-type"/>
</dbReference>
<dbReference type="InterPro" id="IPR018336">
    <property type="entry name" value="RNase_PH_CS"/>
</dbReference>
<dbReference type="NCBIfam" id="TIGR01966">
    <property type="entry name" value="RNasePH"/>
    <property type="match status" value="1"/>
</dbReference>
<dbReference type="PANTHER" id="PTHR11953">
    <property type="entry name" value="EXOSOME COMPLEX COMPONENT"/>
    <property type="match status" value="1"/>
</dbReference>
<dbReference type="PANTHER" id="PTHR11953:SF0">
    <property type="entry name" value="EXOSOME COMPLEX COMPONENT RRP41"/>
    <property type="match status" value="1"/>
</dbReference>
<dbReference type="Pfam" id="PF01138">
    <property type="entry name" value="RNase_PH"/>
    <property type="match status" value="1"/>
</dbReference>
<dbReference type="Pfam" id="PF03725">
    <property type="entry name" value="RNase_PH_C"/>
    <property type="match status" value="1"/>
</dbReference>
<dbReference type="SUPFAM" id="SSF55666">
    <property type="entry name" value="Ribonuclease PH domain 2-like"/>
    <property type="match status" value="1"/>
</dbReference>
<dbReference type="SUPFAM" id="SSF54211">
    <property type="entry name" value="Ribosomal protein S5 domain 2-like"/>
    <property type="match status" value="1"/>
</dbReference>
<dbReference type="PROSITE" id="PS01277">
    <property type="entry name" value="RIBONUCLEASE_PH"/>
    <property type="match status" value="1"/>
</dbReference>
<reference key="1">
    <citation type="journal article" date="2004" name="Proc. Natl. Acad. Sci. U.S.A.">
        <title>Insights into the evolution of Yersinia pestis through whole-genome comparison with Yersinia pseudotuberculosis.</title>
        <authorList>
            <person name="Chain P.S.G."/>
            <person name="Carniel E."/>
            <person name="Larimer F.W."/>
            <person name="Lamerdin J."/>
            <person name="Stoutland P.O."/>
            <person name="Regala W.M."/>
            <person name="Georgescu A.M."/>
            <person name="Vergez L.M."/>
            <person name="Land M.L."/>
            <person name="Motin V.L."/>
            <person name="Brubaker R.R."/>
            <person name="Fowler J."/>
            <person name="Hinnebusch J."/>
            <person name="Marceau M."/>
            <person name="Medigue C."/>
            <person name="Simonet M."/>
            <person name="Chenal-Francisque V."/>
            <person name="Souza B."/>
            <person name="Dacheux D."/>
            <person name="Elliott J.M."/>
            <person name="Derbise A."/>
            <person name="Hauser L.J."/>
            <person name="Garcia E."/>
        </authorList>
    </citation>
    <scope>NUCLEOTIDE SEQUENCE [LARGE SCALE GENOMIC DNA]</scope>
    <source>
        <strain>IP32953</strain>
    </source>
</reference>
<proteinExistence type="inferred from homology"/>
<gene>
    <name evidence="1" type="primary">rph</name>
    <name type="ordered locus">YPTB0041</name>
</gene>
<protein>
    <recommendedName>
        <fullName evidence="1">Ribonuclease PH</fullName>
        <shortName evidence="1">RNase PH</shortName>
        <ecNumber evidence="1">2.7.7.56</ecNumber>
    </recommendedName>
    <alternativeName>
        <fullName evidence="1">tRNA nucleotidyltransferase</fullName>
    </alternativeName>
</protein>
<evidence type="ECO:0000255" key="1">
    <source>
        <dbReference type="HAMAP-Rule" id="MF_00564"/>
    </source>
</evidence>
<name>RNPH_YERPS</name>
<accession>Q66GE1</accession>
<organism>
    <name type="scientific">Yersinia pseudotuberculosis serotype I (strain IP32953)</name>
    <dbReference type="NCBI Taxonomy" id="273123"/>
    <lineage>
        <taxon>Bacteria</taxon>
        <taxon>Pseudomonadati</taxon>
        <taxon>Pseudomonadota</taxon>
        <taxon>Gammaproteobacteria</taxon>
        <taxon>Enterobacterales</taxon>
        <taxon>Yersiniaceae</taxon>
        <taxon>Yersinia</taxon>
    </lineage>
</organism>
<keyword id="KW-0548">Nucleotidyltransferase</keyword>
<keyword id="KW-0694">RNA-binding</keyword>
<keyword id="KW-0698">rRNA processing</keyword>
<keyword id="KW-0808">Transferase</keyword>
<keyword id="KW-0819">tRNA processing</keyword>
<keyword id="KW-0820">tRNA-binding</keyword>
<feature type="chain" id="PRO_0000139956" description="Ribonuclease PH">
    <location>
        <begin position="1"/>
        <end position="238"/>
    </location>
</feature>
<feature type="binding site" evidence="1">
    <location>
        <position position="86"/>
    </location>
    <ligand>
        <name>phosphate</name>
        <dbReference type="ChEBI" id="CHEBI:43474"/>
        <note>substrate</note>
    </ligand>
</feature>
<feature type="binding site" evidence="1">
    <location>
        <begin position="124"/>
        <end position="126"/>
    </location>
    <ligand>
        <name>phosphate</name>
        <dbReference type="ChEBI" id="CHEBI:43474"/>
        <note>substrate</note>
    </ligand>
</feature>
<comment type="function">
    <text evidence="1">Phosphorolytic 3'-5' exoribonuclease that plays an important role in tRNA 3'-end maturation. Removes nucleotide residues following the 3'-CCA terminus of tRNAs; can also add nucleotides to the ends of RNA molecules by using nucleoside diphosphates as substrates, but this may not be physiologically important. Probably plays a role in initiation of 16S rRNA degradation (leading to ribosome degradation) during starvation.</text>
</comment>
<comment type="catalytic activity">
    <reaction evidence="1">
        <text>tRNA(n+1) + phosphate = tRNA(n) + a ribonucleoside 5'-diphosphate</text>
        <dbReference type="Rhea" id="RHEA:10628"/>
        <dbReference type="Rhea" id="RHEA-COMP:17343"/>
        <dbReference type="Rhea" id="RHEA-COMP:17344"/>
        <dbReference type="ChEBI" id="CHEBI:43474"/>
        <dbReference type="ChEBI" id="CHEBI:57930"/>
        <dbReference type="ChEBI" id="CHEBI:173114"/>
        <dbReference type="EC" id="2.7.7.56"/>
    </reaction>
</comment>
<comment type="subunit">
    <text evidence="1">Homohexameric ring arranged as a trimer of dimers.</text>
</comment>
<comment type="similarity">
    <text evidence="1">Belongs to the RNase PH family.</text>
</comment>